<accession>P0A3U0</accession>
<accession>Q57005</accession>
<accession>Q9FB65</accession>
<evidence type="ECO:0000255" key="1">
    <source>
        <dbReference type="PROSITE-ProRule" id="PRU00405"/>
    </source>
</evidence>
<evidence type="ECO:0000269" key="2">
    <source>
    </source>
</evidence>
<evidence type="ECO:0000305" key="3"/>
<evidence type="ECO:0007829" key="4">
    <source>
        <dbReference type="PDB" id="8H2H"/>
    </source>
</evidence>
<protein>
    <recommendedName>
        <fullName>Group II intron-encoded protein LtrA</fullName>
    </recommendedName>
    <domain>
        <recommendedName>
            <fullName>Reverse-transcriptase</fullName>
            <ecNumber>2.7.7.49</ecNumber>
        </recommendedName>
    </domain>
    <domain>
        <recommendedName>
            <fullName>RNA maturase</fullName>
            <ecNumber>3.1.-.-</ecNumber>
        </recommendedName>
    </domain>
    <domain>
        <recommendedName>
            <fullName>DNA endonuclease</fullName>
            <ecNumber>3.1.-.-</ecNumber>
        </recommendedName>
    </domain>
</protein>
<geneLocation type="plasmid">
    <name>pRS01</name>
</geneLocation>
<geneLocation type="plasmid">
    <name>pAH82</name>
</geneLocation>
<reference key="1">
    <citation type="journal article" date="1996" name="J. Bacteriol.">
        <title>Splicing of a group II intron involved in the conjugative transfer of pRS01 in Lactococci.</title>
        <authorList>
            <person name="Mills D.A."/>
            <person name="McKay L.L."/>
            <person name="Dunny G.M."/>
        </authorList>
    </citation>
    <scope>NUCLEOTIDE SEQUENCE [GENOMIC DNA]</scope>
    <source>
        <strain>NCDO 763 / ML3</strain>
        <plasmid>pRS01</plasmid>
    </source>
</reference>
<reference key="2">
    <citation type="journal article" date="2001" name="Appl. Environ. Microbiol.">
        <title>Naturally occurring lactococcal plasmid pAH90 links bacteriophage resistance and mobility functions to a food-grade selectable marker.</title>
        <authorList>
            <person name="O'Sullivan D."/>
            <person name="Ross R.P."/>
            <person name="Twomey D.P."/>
            <person name="Fitzgerald G.F."/>
            <person name="Hill C."/>
            <person name="Coffey A."/>
        </authorList>
    </citation>
    <scope>NUCLEOTIDE SEQUENCE [GENOMIC DNA]</scope>
    <source>
        <plasmid>pAH82</plasmid>
    </source>
</reference>
<reference key="3">
    <citation type="journal article" date="1999" name="Mol. Cell">
        <title>A reverse transcriptase/maturase promotes splicing by binding at its own coding segment in a group II intron RNA.</title>
        <authorList>
            <person name="Wank H."/>
            <person name="SanFilippo J."/>
            <person name="Singh R.N."/>
            <person name="Matsuura M."/>
            <person name="Lambowitz A.M."/>
        </authorList>
    </citation>
    <scope>CHARACTERIZATION</scope>
</reference>
<reference key="4">
    <citation type="journal article" date="1997" name="Genes Dev.">
        <title>A bacterial group II intron encoding reverse transcriptase, maturase, and DNA endonuclease activities: biochemical demonstration of maturase activity and insertion of new genetic information within the intron.</title>
        <authorList>
            <person name="Matsuura M."/>
            <person name="Saldanha R."/>
            <person name="Ma H."/>
            <person name="Wank H."/>
            <person name="Yang J."/>
            <person name="Mohr G."/>
            <person name="Cavanagh S."/>
            <person name="Dunny G.M."/>
            <person name="Belfort M."/>
            <person name="Lambowitz A.M."/>
        </authorList>
    </citation>
    <scope>CHARACTERIZATION</scope>
    <scope>MUTAGENESIS OF 308-ASP-ASP-309</scope>
</reference>
<reference key="5">
    <citation type="journal article" date="1999" name="Biochemistry">
        <title>RNA and protein catalysis in group II intron splicing and mobility reactions using purified components.</title>
        <authorList>
            <person name="Saldanha R."/>
            <person name="Chen B."/>
            <person name="Wank H."/>
            <person name="Matsuura M."/>
            <person name="Edwards J."/>
            <person name="Lambowitz A.M."/>
        </authorList>
    </citation>
    <scope>CHARACTERIZATION</scope>
</reference>
<reference key="6">
    <citation type="journal article" date="2001" name="Nat. Biotechnol.">
        <title>Group II introns as controllable gene targeting vectors for genetic manipulation of bacteria.</title>
        <authorList>
            <person name="Karberg M."/>
            <person name="Guo H."/>
            <person name="Zhong J."/>
            <person name="Coon R."/>
            <person name="Perutka J."/>
            <person name="Lambowitz A.M."/>
        </authorList>
    </citation>
    <scope>INTRON RETARGETING</scope>
    <source>
        <strain>NCDO 763 / ML3</strain>
        <plasmid>pRS01</plasmid>
    </source>
</reference>
<name>LTRA_LACLC</name>
<dbReference type="EC" id="2.7.7.49"/>
<dbReference type="EC" id="3.1.-.-"/>
<dbReference type="EMBL" id="U50902">
    <property type="protein sequence ID" value="AAB06503.1"/>
    <property type="molecule type" value="Genomic_DNA"/>
</dbReference>
<dbReference type="EMBL" id="AF243383">
    <property type="protein sequence ID" value="AAF98310.1"/>
    <property type="molecule type" value="Genomic_DNA"/>
</dbReference>
<dbReference type="RefSeq" id="WP_011835237.1">
    <property type="nucleotide sequence ID" value="NZ_RIMN01000030.1"/>
</dbReference>
<dbReference type="PDB" id="5G2X">
    <property type="method" value="EM"/>
    <property type="resolution" value="3.80 A"/>
    <property type="chains" value="C=1-599"/>
</dbReference>
<dbReference type="PDB" id="7D0F">
    <property type="method" value="EM"/>
    <property type="resolution" value="5.00 A"/>
    <property type="chains" value="C=1-599"/>
</dbReference>
<dbReference type="PDB" id="7D0G">
    <property type="method" value="EM"/>
    <property type="resolution" value="5.00 A"/>
    <property type="chains" value="C=1-599"/>
</dbReference>
<dbReference type="PDB" id="7D1A">
    <property type="method" value="EM"/>
    <property type="resolution" value="3.80 A"/>
    <property type="chains" value="C=1-599"/>
</dbReference>
<dbReference type="PDB" id="8H2H">
    <property type="method" value="EM"/>
    <property type="resolution" value="3.20 A"/>
    <property type="chains" value="D=1-599"/>
</dbReference>
<dbReference type="PDBsum" id="5G2X"/>
<dbReference type="PDBsum" id="7D0F"/>
<dbReference type="PDBsum" id="7D0G"/>
<dbReference type="PDBsum" id="7D1A"/>
<dbReference type="PDBsum" id="8H2H"/>
<dbReference type="EMDB" id="EMD-30532"/>
<dbReference type="EMDB" id="EMD-30533"/>
<dbReference type="EMDB" id="EMD-3331"/>
<dbReference type="SMR" id="P0A3U0"/>
<dbReference type="OMA" id="NKSCHTA"/>
<dbReference type="GO" id="GO:0004519">
    <property type="term" value="F:endonuclease activity"/>
    <property type="evidence" value="ECO:0007669"/>
    <property type="project" value="UniProtKB-KW"/>
</dbReference>
<dbReference type="GO" id="GO:0003964">
    <property type="term" value="F:RNA-directed DNA polymerase activity"/>
    <property type="evidence" value="ECO:0007669"/>
    <property type="project" value="UniProtKB-KW"/>
</dbReference>
<dbReference type="GO" id="GO:0006314">
    <property type="term" value="P:intron homing"/>
    <property type="evidence" value="ECO:0007669"/>
    <property type="project" value="UniProtKB-KW"/>
</dbReference>
<dbReference type="GO" id="GO:0006397">
    <property type="term" value="P:mRNA processing"/>
    <property type="evidence" value="ECO:0007669"/>
    <property type="project" value="InterPro"/>
</dbReference>
<dbReference type="CDD" id="cd01651">
    <property type="entry name" value="RT_G2_intron"/>
    <property type="match status" value="1"/>
</dbReference>
<dbReference type="InterPro" id="IPR049030">
    <property type="entry name" value="AI2M-like_HNH"/>
</dbReference>
<dbReference type="InterPro" id="IPR043502">
    <property type="entry name" value="DNA/RNA_pol_sf"/>
</dbReference>
<dbReference type="InterPro" id="IPR024937">
    <property type="entry name" value="Domain_X"/>
</dbReference>
<dbReference type="InterPro" id="IPR051083">
    <property type="entry name" value="GrpII_Intron_Splice-Mob/Def"/>
</dbReference>
<dbReference type="InterPro" id="IPR000477">
    <property type="entry name" value="RT_dom"/>
</dbReference>
<dbReference type="PANTHER" id="PTHR34047">
    <property type="entry name" value="NUCLEAR INTRON MATURASE 1, MITOCHONDRIAL-RELATED"/>
    <property type="match status" value="1"/>
</dbReference>
<dbReference type="PANTHER" id="PTHR34047:SF8">
    <property type="entry name" value="PROTEIN YKFC"/>
    <property type="match status" value="1"/>
</dbReference>
<dbReference type="Pfam" id="PF21368">
    <property type="entry name" value="AI2M-like_HNH"/>
    <property type="match status" value="1"/>
</dbReference>
<dbReference type="Pfam" id="PF01348">
    <property type="entry name" value="Intron_maturas2"/>
    <property type="match status" value="1"/>
</dbReference>
<dbReference type="Pfam" id="PF00078">
    <property type="entry name" value="RVT_1"/>
    <property type="match status" value="2"/>
</dbReference>
<dbReference type="SUPFAM" id="SSF56672">
    <property type="entry name" value="DNA/RNA polymerases"/>
    <property type="match status" value="1"/>
</dbReference>
<dbReference type="PROSITE" id="PS50878">
    <property type="entry name" value="RT_POL"/>
    <property type="match status" value="1"/>
</dbReference>
<sequence>MKPTMAILERISKNSQENIDEVFTRLYRYLLRPDIYYVAYQNLYSNKGASTKGILDDTADGFSEEKIKKIIQSLKDGTYYPQPVRRMYIAKKNSKKMRPLGIPTFTDKLIQEAVRIILESIYEPVFEDVSHGFRPQRSCHTALKTIKREFGGARWFVEGDIKGCFDNIDHVTLIGLINLKIKDMKMSQLIYKFLKAGYLENWQYHKTYSGTPQGGILSPLLANIYLHELDKFVLQLKMKFDRESPERITPEYRELHNEIKRISHRLKKLEGEEKAKVLLEYQEKRKRLPTLPCTSQTNKVLKYVRYADDFIISVKGSKEDCQWIKEQLKLFIHNKLKMELSEEKTLITHSSQPARFLGYDIRVRRSGTIKRSGKVKKRTLNGSVELLIPLQDKIRQFIFDKKIAIQKKDSSWFPVHRKYLIRSTDLEIITIYNSELRGICNYYGLASNFNQLNYFAYLMEYSCLKTIASKHKGTLSKTISMFKDGSGSWGIPYEIKQGKQRRYFANFSECKSPYQFTDEISQAPVLYGYARNTLENRLKAKCCELCGTSDENTSYEIHHVNKVKNLKGKEKWEMAMIAKQRKTLVVCFHCHRHVIHKHK</sequence>
<feature type="chain" id="PRO_0000084512" description="Group II intron-encoded protein LtrA">
    <location>
        <begin position="1"/>
        <end position="599"/>
    </location>
</feature>
<feature type="domain" description="Reverse transcriptase" evidence="1">
    <location>
        <begin position="70"/>
        <end position="361"/>
    </location>
</feature>
<feature type="region of interest" description="Intron maturase type-2">
    <location>
        <begin position="381"/>
        <end position="549"/>
    </location>
</feature>
<feature type="mutagenesis site" description="Loss of RT function." evidence="2">
    <original>DD</original>
    <variation>AA</variation>
    <location>
        <begin position="308"/>
        <end position="309"/>
    </location>
</feature>
<feature type="helix" evidence="4">
    <location>
        <begin position="4"/>
        <end position="6"/>
    </location>
</feature>
<feature type="helix" evidence="4">
    <location>
        <begin position="7"/>
        <end position="17"/>
    </location>
</feature>
<feature type="strand" evidence="4">
    <location>
        <begin position="18"/>
        <end position="20"/>
    </location>
</feature>
<feature type="helix" evidence="4">
    <location>
        <begin position="27"/>
        <end position="29"/>
    </location>
</feature>
<feature type="strand" evidence="4">
    <location>
        <begin position="30"/>
        <end position="32"/>
    </location>
</feature>
<feature type="turn" evidence="4">
    <location>
        <begin position="33"/>
        <end position="44"/>
    </location>
</feature>
<feature type="helix" evidence="4">
    <location>
        <begin position="64"/>
        <end position="71"/>
    </location>
</feature>
<feature type="turn" evidence="4">
    <location>
        <begin position="72"/>
        <end position="77"/>
    </location>
</feature>
<feature type="helix" evidence="4">
    <location>
        <begin position="107"/>
        <end position="122"/>
    </location>
</feature>
<feature type="turn" evidence="4">
    <location>
        <begin position="123"/>
        <end position="125"/>
    </location>
</feature>
<feature type="helix" evidence="4">
    <location>
        <begin position="139"/>
        <end position="149"/>
    </location>
</feature>
<feature type="turn" evidence="4">
    <location>
        <begin position="162"/>
        <end position="166"/>
    </location>
</feature>
<feature type="helix" evidence="4">
    <location>
        <begin position="172"/>
        <end position="180"/>
    </location>
</feature>
<feature type="helix" evidence="4">
    <location>
        <begin position="184"/>
        <end position="195"/>
    </location>
</feature>
<feature type="turn" evidence="4">
    <location>
        <begin position="205"/>
        <end position="209"/>
    </location>
</feature>
<feature type="turn" evidence="4">
    <location>
        <begin position="213"/>
        <end position="215"/>
    </location>
</feature>
<feature type="helix" evidence="4">
    <location>
        <begin position="221"/>
        <end position="230"/>
    </location>
</feature>
<feature type="helix" evidence="4">
    <location>
        <begin position="233"/>
        <end position="240"/>
    </location>
</feature>
<feature type="helix" evidence="4">
    <location>
        <begin position="250"/>
        <end position="266"/>
    </location>
</feature>
<feature type="helix" evidence="4">
    <location>
        <begin position="272"/>
        <end position="282"/>
    </location>
</feature>
<feature type="helix" evidence="4">
    <location>
        <begin position="284"/>
        <end position="287"/>
    </location>
</feature>
<feature type="strand" evidence="4">
    <location>
        <begin position="288"/>
        <end position="291"/>
    </location>
</feature>
<feature type="strand" evidence="4">
    <location>
        <begin position="314"/>
        <end position="316"/>
    </location>
</feature>
<feature type="strand" evidence="4">
    <location>
        <begin position="318"/>
        <end position="320"/>
    </location>
</feature>
<feature type="turn" evidence="4">
    <location>
        <begin position="321"/>
        <end position="325"/>
    </location>
</feature>
<feature type="helix" evidence="4">
    <location>
        <begin position="326"/>
        <end position="332"/>
    </location>
</feature>
<feature type="turn" evidence="4">
    <location>
        <begin position="333"/>
        <end position="336"/>
    </location>
</feature>
<feature type="turn" evidence="4">
    <location>
        <begin position="342"/>
        <end position="344"/>
    </location>
</feature>
<feature type="turn" evidence="4">
    <location>
        <begin position="390"/>
        <end position="392"/>
    </location>
</feature>
<feature type="helix" evidence="4">
    <location>
        <begin position="393"/>
        <end position="400"/>
    </location>
</feature>
<feature type="helix" evidence="4">
    <location>
        <begin position="418"/>
        <end position="420"/>
    </location>
</feature>
<feature type="helix" evidence="4">
    <location>
        <begin position="425"/>
        <end position="442"/>
    </location>
</feature>
<feature type="helix" evidence="4">
    <location>
        <begin position="443"/>
        <end position="445"/>
    </location>
</feature>
<feature type="helix" evidence="4">
    <location>
        <begin position="449"/>
        <end position="452"/>
    </location>
</feature>
<feature type="helix" evidence="4">
    <location>
        <begin position="453"/>
        <end position="471"/>
    </location>
</feature>
<feature type="helix" evidence="4">
    <location>
        <begin position="475"/>
        <end position="481"/>
    </location>
</feature>
<feature type="strand" evidence="4">
    <location>
        <begin position="485"/>
        <end position="487"/>
    </location>
</feature>
<feature type="helix" evidence="4">
    <location>
        <begin position="508"/>
        <end position="511"/>
    </location>
</feature>
<feature type="strand" evidence="4">
    <location>
        <begin position="533"/>
        <end position="535"/>
    </location>
</feature>
<feature type="turn" evidence="4">
    <location>
        <begin position="536"/>
        <end position="541"/>
    </location>
</feature>
<feature type="turn" evidence="4">
    <location>
        <begin position="544"/>
        <end position="546"/>
    </location>
</feature>
<feature type="strand" evidence="4">
    <location>
        <begin position="551"/>
        <end position="553"/>
    </location>
</feature>
<feature type="strand" evidence="4">
    <location>
        <begin position="568"/>
        <end position="572"/>
    </location>
</feature>
<feature type="turn" evidence="4">
    <location>
        <begin position="573"/>
        <end position="575"/>
    </location>
</feature>
<feature type="helix" evidence="4">
    <location>
        <begin position="576"/>
        <end position="579"/>
    </location>
</feature>
<feature type="strand" evidence="4">
    <location>
        <begin position="582"/>
        <end position="584"/>
    </location>
</feature>
<feature type="turn" evidence="4">
    <location>
        <begin position="588"/>
        <end position="590"/>
    </location>
</feature>
<feature type="helix" evidence="4">
    <location>
        <begin position="591"/>
        <end position="594"/>
    </location>
</feature>
<proteinExistence type="evidence at protein level"/>
<gene>
    <name type="primary">ltrA</name>
    <name type="synonym">matR</name>
</gene>
<keyword id="KW-0002">3D-structure</keyword>
<keyword id="KW-0255">Endonuclease</keyword>
<keyword id="KW-0378">Hydrolase</keyword>
<keyword id="KW-0404">Intron homing</keyword>
<keyword id="KW-0460">Magnesium</keyword>
<keyword id="KW-0511">Multifunctional enzyme</keyword>
<keyword id="KW-0540">Nuclease</keyword>
<keyword id="KW-0548">Nucleotidyltransferase</keyword>
<keyword id="KW-0614">Plasmid</keyword>
<keyword id="KW-0695">RNA-directed DNA polymerase</keyword>
<keyword id="KW-0808">Transferase</keyword>
<comment type="function">
    <text>Multifunctional protein that promotes group II intron splicing and mobility by acting both on RNA and DNA. It has three activities: reverse transcriptase (RT) for intron duplication, maturase to promote splicing, and DNA endonuclease for site-specific cleavage of recipient alleles. The intron-encoded protein promotes splicing by facilitating the formation of the catalytically active structure of the intron RNA. After splicing, the protein remains bound to the excised intron lariat RNA, forming ribonucleoprotein particles, and cleaving the antisense strand of the recipient DNA in the 3' exon. After DNA cleavage, retrohoming occurs by a target DNA-primed reverse transcription of the intron RNA that had reverse spliced into the sense strand of the recipient DNA. It also contributes to the recognition of the DNA target site and acts as a repressor of its own translation.</text>
</comment>
<comment type="catalytic activity">
    <reaction evidence="1">
        <text>DNA(n) + a 2'-deoxyribonucleoside 5'-triphosphate = DNA(n+1) + diphosphate</text>
        <dbReference type="Rhea" id="RHEA:22508"/>
        <dbReference type="Rhea" id="RHEA-COMP:17339"/>
        <dbReference type="Rhea" id="RHEA-COMP:17340"/>
        <dbReference type="ChEBI" id="CHEBI:33019"/>
        <dbReference type="ChEBI" id="CHEBI:61560"/>
        <dbReference type="ChEBI" id="CHEBI:173112"/>
        <dbReference type="EC" id="2.7.7.49"/>
    </reaction>
</comment>
<comment type="cofactor">
    <cofactor>
        <name>Mg(2+)</name>
        <dbReference type="ChEBI" id="CHEBI:18420"/>
    </cofactor>
</comment>
<comment type="subunit">
    <text evidence="3">Homodimer.</text>
</comment>
<comment type="biotechnology">
    <text>Mobile group II introns can be retargeted and used for highly specific chromosomal gene disruption in bacteria. Could be useful for genetic engineering and functional genomics in a wide variety of bacteria.</text>
</comment>
<comment type="miscellaneous">
    <text>The correct folding of LtrA seems to be facilitated by binding to the unspliced precursor or intron RNA. RNA would serve in part as a chaperone that promotes folding of the protein into an active conformation. Purified protein lacks endonuclease activity unless complexed with intron lariat RNA. It may preferentially function in cis by binding to the intron RNA from which it was translated.</text>
</comment>
<comment type="similarity">
    <text evidence="3">In the N-terminal section; belongs to the bacterial reverse transcriptase family.</text>
</comment>
<organism>
    <name type="scientific">Lactococcus lactis subsp. cremoris</name>
    <name type="common">Streptococcus cremoris</name>
    <dbReference type="NCBI Taxonomy" id="1359"/>
    <lineage>
        <taxon>Bacteria</taxon>
        <taxon>Bacillati</taxon>
        <taxon>Bacillota</taxon>
        <taxon>Bacilli</taxon>
        <taxon>Lactobacillales</taxon>
        <taxon>Streptococcaceae</taxon>
        <taxon>Lactococcus</taxon>
    </lineage>
</organism>